<name>CORZ_DROME</name>
<organism>
    <name type="scientific">Drosophila melanogaster</name>
    <name type="common">Fruit fly</name>
    <dbReference type="NCBI Taxonomy" id="7227"/>
    <lineage>
        <taxon>Eukaryota</taxon>
        <taxon>Metazoa</taxon>
        <taxon>Ecdysozoa</taxon>
        <taxon>Arthropoda</taxon>
        <taxon>Hexapoda</taxon>
        <taxon>Insecta</taxon>
        <taxon>Pterygota</taxon>
        <taxon>Neoptera</taxon>
        <taxon>Endopterygota</taxon>
        <taxon>Diptera</taxon>
        <taxon>Brachycera</taxon>
        <taxon>Muscomorpha</taxon>
        <taxon>Ephydroidea</taxon>
        <taxon>Drosophilidae</taxon>
        <taxon>Drosophila</taxon>
        <taxon>Sophophora</taxon>
    </lineage>
</organism>
<accession>Q26377</accession>
<accession>Q9VFK7</accession>
<gene>
    <name type="primary">Crz</name>
    <name type="ORF">CG3302</name>
</gene>
<dbReference type="EMBL" id="AE014297">
    <property type="protein sequence ID" value="AAF55046.1"/>
    <property type="molecule type" value="Genomic_DNA"/>
</dbReference>
<dbReference type="EMBL" id="S74038">
    <property type="protein sequence ID" value="AAB32283.1"/>
    <property type="status" value="ALT_SEQ"/>
    <property type="molecule type" value="Genomic_DNA"/>
</dbReference>
<dbReference type="PIR" id="JC2384">
    <property type="entry name" value="JC2384"/>
</dbReference>
<dbReference type="RefSeq" id="NP_524350.1">
    <property type="nucleotide sequence ID" value="NM_079626.3"/>
</dbReference>
<dbReference type="BioGRID" id="66818">
    <property type="interactions" value="3"/>
</dbReference>
<dbReference type="FunCoup" id="Q26377">
    <property type="interactions" value="91"/>
</dbReference>
<dbReference type="STRING" id="7227.FBpp0082386"/>
<dbReference type="PaxDb" id="7227-FBpp0082386"/>
<dbReference type="EnsemblMetazoa" id="FBtr0082927">
    <property type="protein sequence ID" value="FBpp0082386"/>
    <property type="gene ID" value="FBgn0013767"/>
</dbReference>
<dbReference type="GeneID" id="41742"/>
<dbReference type="KEGG" id="dme:Dmel_CG3302"/>
<dbReference type="UCSC" id="CG3302-RA">
    <property type="organism name" value="d. melanogaster"/>
</dbReference>
<dbReference type="AGR" id="FB:FBgn0013767"/>
<dbReference type="CTD" id="12973"/>
<dbReference type="FlyBase" id="FBgn0013767">
    <property type="gene designation" value="Crz"/>
</dbReference>
<dbReference type="VEuPathDB" id="VectorBase:FBgn0013767"/>
<dbReference type="eggNOG" id="ENOG502T821">
    <property type="taxonomic scope" value="Eukaryota"/>
</dbReference>
<dbReference type="HOGENOM" id="CLU_1679760_0_0_1"/>
<dbReference type="InParanoid" id="Q26377"/>
<dbReference type="OMA" id="RHRQSNE"/>
<dbReference type="OrthoDB" id="6436322at2759"/>
<dbReference type="PhylomeDB" id="Q26377"/>
<dbReference type="BioGRID-ORCS" id="41742">
    <property type="hits" value="0 hits in 1 CRISPR screen"/>
</dbReference>
<dbReference type="GenomeRNAi" id="41742"/>
<dbReference type="PRO" id="PR:Q26377"/>
<dbReference type="Proteomes" id="UP000000803">
    <property type="component" value="Chromosome 3R"/>
</dbReference>
<dbReference type="Bgee" id="FBgn0013767">
    <property type="expression patterns" value="Expressed in columnar neuron T1 (Drosophila) in insect head and 27 other cell types or tissues"/>
</dbReference>
<dbReference type="GO" id="GO:0005576">
    <property type="term" value="C:extracellular region"/>
    <property type="evidence" value="ECO:0000314"/>
    <property type="project" value="UniProtKB"/>
</dbReference>
<dbReference type="GO" id="GO:0005615">
    <property type="term" value="C:extracellular space"/>
    <property type="evidence" value="ECO:0000314"/>
    <property type="project" value="FlyBase"/>
</dbReference>
<dbReference type="GO" id="GO:0071858">
    <property type="term" value="F:corazonin receptor binding"/>
    <property type="evidence" value="ECO:0000353"/>
    <property type="project" value="FlyBase"/>
</dbReference>
<dbReference type="GO" id="GO:0005184">
    <property type="term" value="F:neuropeptide hormone activity"/>
    <property type="evidence" value="ECO:0000250"/>
    <property type="project" value="UniProtKB"/>
</dbReference>
<dbReference type="GO" id="GO:0006117">
    <property type="term" value="P:acetaldehyde metabolic process"/>
    <property type="evidence" value="ECO:0000315"/>
    <property type="project" value="FlyBase"/>
</dbReference>
<dbReference type="GO" id="GO:0048149">
    <property type="term" value="P:behavioral response to ethanol"/>
    <property type="evidence" value="ECO:0000315"/>
    <property type="project" value="FlyBase"/>
</dbReference>
<dbReference type="GO" id="GO:0071361">
    <property type="term" value="P:cellular response to ethanol"/>
    <property type="evidence" value="ECO:0000315"/>
    <property type="project" value="FlyBase"/>
</dbReference>
<dbReference type="GO" id="GO:0007619">
    <property type="term" value="P:courtship behavior"/>
    <property type="evidence" value="ECO:0000315"/>
    <property type="project" value="FlyBase"/>
</dbReference>
<dbReference type="GO" id="GO:0007218">
    <property type="term" value="P:neuropeptide signaling pathway"/>
    <property type="evidence" value="ECO:0000314"/>
    <property type="project" value="FlyBase"/>
</dbReference>
<dbReference type="GO" id="GO:0045823">
    <property type="term" value="P:positive regulation of heart contraction"/>
    <property type="evidence" value="ECO:0000250"/>
    <property type="project" value="UniProtKB"/>
</dbReference>
<dbReference type="InterPro" id="IPR020190">
    <property type="entry name" value="Procorazonin"/>
</dbReference>
<dbReference type="Pfam" id="PF17308">
    <property type="entry name" value="Corazonin"/>
    <property type="match status" value="1"/>
</dbReference>
<reference key="1">
    <citation type="journal article" date="2000" name="Science">
        <title>The genome sequence of Drosophila melanogaster.</title>
        <authorList>
            <person name="Adams M.D."/>
            <person name="Celniker S.E."/>
            <person name="Holt R.A."/>
            <person name="Evans C.A."/>
            <person name="Gocayne J.D."/>
            <person name="Amanatides P.G."/>
            <person name="Scherer S.E."/>
            <person name="Li P.W."/>
            <person name="Hoskins R.A."/>
            <person name="Galle R.F."/>
            <person name="George R.A."/>
            <person name="Lewis S.E."/>
            <person name="Richards S."/>
            <person name="Ashburner M."/>
            <person name="Henderson S.N."/>
            <person name="Sutton G.G."/>
            <person name="Wortman J.R."/>
            <person name="Yandell M.D."/>
            <person name="Zhang Q."/>
            <person name="Chen L.X."/>
            <person name="Brandon R.C."/>
            <person name="Rogers Y.-H.C."/>
            <person name="Blazej R.G."/>
            <person name="Champe M."/>
            <person name="Pfeiffer B.D."/>
            <person name="Wan K.H."/>
            <person name="Doyle C."/>
            <person name="Baxter E.G."/>
            <person name="Helt G."/>
            <person name="Nelson C.R."/>
            <person name="Miklos G.L.G."/>
            <person name="Abril J.F."/>
            <person name="Agbayani A."/>
            <person name="An H.-J."/>
            <person name="Andrews-Pfannkoch C."/>
            <person name="Baldwin D."/>
            <person name="Ballew R.M."/>
            <person name="Basu A."/>
            <person name="Baxendale J."/>
            <person name="Bayraktaroglu L."/>
            <person name="Beasley E.M."/>
            <person name="Beeson K.Y."/>
            <person name="Benos P.V."/>
            <person name="Berman B.P."/>
            <person name="Bhandari D."/>
            <person name="Bolshakov S."/>
            <person name="Borkova D."/>
            <person name="Botchan M.R."/>
            <person name="Bouck J."/>
            <person name="Brokstein P."/>
            <person name="Brottier P."/>
            <person name="Burtis K.C."/>
            <person name="Busam D.A."/>
            <person name="Butler H."/>
            <person name="Cadieu E."/>
            <person name="Center A."/>
            <person name="Chandra I."/>
            <person name="Cherry J.M."/>
            <person name="Cawley S."/>
            <person name="Dahlke C."/>
            <person name="Davenport L.B."/>
            <person name="Davies P."/>
            <person name="de Pablos B."/>
            <person name="Delcher A."/>
            <person name="Deng Z."/>
            <person name="Mays A.D."/>
            <person name="Dew I."/>
            <person name="Dietz S.M."/>
            <person name="Dodson K."/>
            <person name="Doup L.E."/>
            <person name="Downes M."/>
            <person name="Dugan-Rocha S."/>
            <person name="Dunkov B.C."/>
            <person name="Dunn P."/>
            <person name="Durbin K.J."/>
            <person name="Evangelista C.C."/>
            <person name="Ferraz C."/>
            <person name="Ferriera S."/>
            <person name="Fleischmann W."/>
            <person name="Fosler C."/>
            <person name="Gabrielian A.E."/>
            <person name="Garg N.S."/>
            <person name="Gelbart W.M."/>
            <person name="Glasser K."/>
            <person name="Glodek A."/>
            <person name="Gong F."/>
            <person name="Gorrell J.H."/>
            <person name="Gu Z."/>
            <person name="Guan P."/>
            <person name="Harris M."/>
            <person name="Harris N.L."/>
            <person name="Harvey D.A."/>
            <person name="Heiman T.J."/>
            <person name="Hernandez J.R."/>
            <person name="Houck J."/>
            <person name="Hostin D."/>
            <person name="Houston K.A."/>
            <person name="Howland T.J."/>
            <person name="Wei M.-H."/>
            <person name="Ibegwam C."/>
            <person name="Jalali M."/>
            <person name="Kalush F."/>
            <person name="Karpen G.H."/>
            <person name="Ke Z."/>
            <person name="Kennison J.A."/>
            <person name="Ketchum K.A."/>
            <person name="Kimmel B.E."/>
            <person name="Kodira C.D."/>
            <person name="Kraft C.L."/>
            <person name="Kravitz S."/>
            <person name="Kulp D."/>
            <person name="Lai Z."/>
            <person name="Lasko P."/>
            <person name="Lei Y."/>
            <person name="Levitsky A.A."/>
            <person name="Li J.H."/>
            <person name="Li Z."/>
            <person name="Liang Y."/>
            <person name="Lin X."/>
            <person name="Liu X."/>
            <person name="Mattei B."/>
            <person name="McIntosh T.C."/>
            <person name="McLeod M.P."/>
            <person name="McPherson D."/>
            <person name="Merkulov G."/>
            <person name="Milshina N.V."/>
            <person name="Mobarry C."/>
            <person name="Morris J."/>
            <person name="Moshrefi A."/>
            <person name="Mount S.M."/>
            <person name="Moy M."/>
            <person name="Murphy B."/>
            <person name="Murphy L."/>
            <person name="Muzny D.M."/>
            <person name="Nelson D.L."/>
            <person name="Nelson D.R."/>
            <person name="Nelson K.A."/>
            <person name="Nixon K."/>
            <person name="Nusskern D.R."/>
            <person name="Pacleb J.M."/>
            <person name="Palazzolo M."/>
            <person name="Pittman G.S."/>
            <person name="Pan S."/>
            <person name="Pollard J."/>
            <person name="Puri V."/>
            <person name="Reese M.G."/>
            <person name="Reinert K."/>
            <person name="Remington K."/>
            <person name="Saunders R.D.C."/>
            <person name="Scheeler F."/>
            <person name="Shen H."/>
            <person name="Shue B.C."/>
            <person name="Siden-Kiamos I."/>
            <person name="Simpson M."/>
            <person name="Skupski M.P."/>
            <person name="Smith T.J."/>
            <person name="Spier E."/>
            <person name="Spradling A.C."/>
            <person name="Stapleton M."/>
            <person name="Strong R."/>
            <person name="Sun E."/>
            <person name="Svirskas R."/>
            <person name="Tector C."/>
            <person name="Turner R."/>
            <person name="Venter E."/>
            <person name="Wang A.H."/>
            <person name="Wang X."/>
            <person name="Wang Z.-Y."/>
            <person name="Wassarman D.A."/>
            <person name="Weinstock G.M."/>
            <person name="Weissenbach J."/>
            <person name="Williams S.M."/>
            <person name="Woodage T."/>
            <person name="Worley K.C."/>
            <person name="Wu D."/>
            <person name="Yang S."/>
            <person name="Yao Q.A."/>
            <person name="Ye J."/>
            <person name="Yeh R.-F."/>
            <person name="Zaveri J.S."/>
            <person name="Zhan M."/>
            <person name="Zhang G."/>
            <person name="Zhao Q."/>
            <person name="Zheng L."/>
            <person name="Zheng X.H."/>
            <person name="Zhong F.N."/>
            <person name="Zhong W."/>
            <person name="Zhou X."/>
            <person name="Zhu S.C."/>
            <person name="Zhu X."/>
            <person name="Smith H.O."/>
            <person name="Gibbs R.A."/>
            <person name="Myers E.W."/>
            <person name="Rubin G.M."/>
            <person name="Venter J.C."/>
        </authorList>
    </citation>
    <scope>NUCLEOTIDE SEQUENCE [LARGE SCALE GENOMIC DNA]</scope>
    <source>
        <strain>Berkeley</strain>
    </source>
</reference>
<reference key="2">
    <citation type="journal article" date="2002" name="Genome Biol.">
        <title>Annotation of the Drosophila melanogaster euchromatic genome: a systematic review.</title>
        <authorList>
            <person name="Misra S."/>
            <person name="Crosby M.A."/>
            <person name="Mungall C.J."/>
            <person name="Matthews B.B."/>
            <person name="Campbell K.S."/>
            <person name="Hradecky P."/>
            <person name="Huang Y."/>
            <person name="Kaminker J.S."/>
            <person name="Millburn G.H."/>
            <person name="Prochnik S.E."/>
            <person name="Smith C.D."/>
            <person name="Tupy J.L."/>
            <person name="Whitfield E.J."/>
            <person name="Bayraktaroglu L."/>
            <person name="Berman B.P."/>
            <person name="Bettencourt B.R."/>
            <person name="Celniker S.E."/>
            <person name="de Grey A.D.N.J."/>
            <person name="Drysdale R.A."/>
            <person name="Harris N.L."/>
            <person name="Richter J."/>
            <person name="Russo S."/>
            <person name="Schroeder A.J."/>
            <person name="Shu S.Q."/>
            <person name="Stapleton M."/>
            <person name="Yamada C."/>
            <person name="Ashburner M."/>
            <person name="Gelbart W.M."/>
            <person name="Rubin G.M."/>
            <person name="Lewis S.E."/>
        </authorList>
    </citation>
    <scope>GENOME REANNOTATION</scope>
    <source>
        <strain>Berkeley</strain>
    </source>
</reference>
<reference key="3">
    <citation type="journal article" date="1994" name="Biochem. Biophys. Res. Commun.">
        <title>Isolation and structure of the Drosophila corazonin gene.</title>
        <authorList>
            <person name="Veenstra J.A."/>
        </authorList>
    </citation>
    <scope>NUCLEOTIDE SEQUENCE [GENOMIC DNA] OF 1-82</scope>
</reference>
<reference key="4">
    <citation type="journal article" date="2002" name="J. Biol. Chem.">
        <title>Peptidomics of the larval Drosophila melanogaster central nervous system.</title>
        <authorList>
            <person name="Baggerman G."/>
            <person name="Cerstiaens A."/>
            <person name="De Loof A."/>
            <person name="Schoofs L."/>
        </authorList>
    </citation>
    <scope>PROTEIN SEQUENCE OF 20-30</scope>
    <scope>PYROGLUTAMATE FORMATION AT GLN-20</scope>
    <scope>AMIDATION AT ASN-30</scope>
    <source>
        <tissue>Larva</tissue>
    </source>
</reference>
<reference key="5">
    <citation type="journal article" date="2004" name="J. Comp. Neurol.">
        <title>Peptidomics of CNS-associated neurohemal systems of adult Drosophila melanogaster: a mass spectrometric survey of peptides from individual flies.</title>
        <authorList>
            <person name="Predel R."/>
            <person name="Wegener C."/>
            <person name="Russell W.K."/>
            <person name="Tichy S.E."/>
            <person name="Russell D.H."/>
            <person name="Nachman R.J."/>
        </authorList>
    </citation>
    <scope>MASS SPECTROMETRY</scope>
    <source>
        <tissue>Cerebral ganglion</tissue>
        <tissue>Corpora cardiaca</tissue>
    </source>
</reference>
<reference key="6">
    <citation type="journal article" date="2005" name="J. Comp. Neurol.">
        <title>Comparative analysis of Corazonin-encoding genes (Crz's) in Drosophila species and functional insights into Crz-expressing neurons.</title>
        <authorList>
            <person name="Choi Y.J."/>
            <person name="Lee G."/>
            <person name="Hall J.C."/>
            <person name="Park J.H."/>
        </authorList>
    </citation>
    <scope>FUNCTION</scope>
    <scope>TISSUE SPECIFICITY</scope>
    <source>
        <tissue>Head</tissue>
    </source>
</reference>
<reference key="7">
    <citation type="journal article" date="2008" name="Cell Tissue Res.">
        <title>Developmental regulation and functions of the expression of the neuropeptide corazonin in Drosophila melanogaster.</title>
        <authorList>
            <person name="Lee G."/>
            <person name="Kim K.-M."/>
            <person name="Kikuno K."/>
            <person name="Wang Z."/>
            <person name="Choi Y.-J."/>
            <person name="Park J.H."/>
        </authorList>
    </citation>
    <scope>TISSUE SPECIFICITY</scope>
</reference>
<evidence type="ECO:0000250" key="1"/>
<evidence type="ECO:0000255" key="2"/>
<evidence type="ECO:0000256" key="3">
    <source>
        <dbReference type="SAM" id="MobiDB-lite"/>
    </source>
</evidence>
<evidence type="ECO:0000269" key="4">
    <source>
    </source>
</evidence>
<evidence type="ECO:0000269" key="5">
    <source>
    </source>
</evidence>
<evidence type="ECO:0000269" key="6">
    <source>
    </source>
</evidence>
<evidence type="ECO:0000269" key="7">
    <source>
    </source>
</evidence>
<evidence type="ECO:0000305" key="8"/>
<comment type="function">
    <text evidence="6">Cardioactive peptide. Corazonin is probably involved in the physiological regulation of the heart beat. Clock (Clk) and cycle (cyc) proteins negatively regulate Crz transcription in a cell-specific manner.</text>
</comment>
<comment type="subcellular location">
    <molecule>Corazonin</molecule>
    <subcellularLocation>
        <location>Secreted</location>
    </subcellularLocation>
</comment>
<comment type="subcellular location">
    <molecule>Corazonin precursor-related peptide</molecule>
    <subcellularLocation>
        <location evidence="1">Secreted</location>
    </subcellularLocation>
</comment>
<comment type="tissue specificity">
    <text evidence="6 7">From late embryo to larva, expression is consistently detected in three neuronal groups: dorso-lateral neurons (DL), dorso-medial neurons (DM), and neurons in the ventral nerve cord (vCrz). Both the vCrz and DM groups die via programmed cell death during metamorphosis, whereas the DL neurons persist to adulthood. In adults, expression is seen in a cluster of six to eight neurons per lobe in the pars lateralis (DLP), in numerous neuronal cells in the optic lobes, and in a novel group of four abdominal ganglionic neurons present only in males (ms-aCrz). Projections of the ms-aCrz neurons terminate within the ventral nerve cord, implying a role as interneurons. Terminals of the DLP neurons are found in the retrocerebral complex that produces juvenile hormone and adipokinetic hormone, located in the vicinity of terminals emanating from PDF-containing pacemaking neurons.</text>
</comment>
<comment type="mass spectrometry">
    <molecule>Corazonin</molecule>
</comment>
<comment type="similarity">
    <text evidence="8">Belongs to the corazonin family.</text>
</comment>
<comment type="sequence caution" evidence="8">
    <conflict type="erroneous gene model prediction">
        <sequence resource="EMBL-CDS" id="AAB32283"/>
    </conflict>
</comment>
<sequence>MLRLLLLPLFLFTLSMCMGQTFQYSRGWTNGKRSFNAASPLLANGHLHRASELGLTDLYDLQDWSSDRRLERCLSQLQRSLIARNCVPGSDFNANRVDPDPENSAHPRLSNSNGENVLYSSANIPNRHRQSNELLEELSAAGGASAEPNVFGKH</sequence>
<protein>
    <recommendedName>
        <fullName>Pro-corazonin</fullName>
        <shortName>Crz</shortName>
        <shortName>Dm-Crz</shortName>
    </recommendedName>
    <component>
        <recommendedName>
            <fullName>Corazonin</fullName>
        </recommendedName>
    </component>
    <component>
        <recommendedName>
            <fullName>Corazonin precursor-related peptide</fullName>
            <shortName>CPRP</shortName>
        </recommendedName>
        <alternativeName>
            <fullName>Crz-associated peptide</fullName>
        </alternativeName>
    </component>
</protein>
<proteinExistence type="evidence at protein level"/>
<feature type="signal peptide" evidence="4">
    <location>
        <begin position="1"/>
        <end position="19"/>
    </location>
</feature>
<feature type="chain" id="PRO_0000341610" description="Pro-corazonin" evidence="2">
    <location>
        <begin position="20"/>
        <end position="154"/>
    </location>
</feature>
<feature type="peptide" id="PRO_0000000948" description="Corazonin">
    <location>
        <begin position="20"/>
        <end position="30"/>
    </location>
</feature>
<feature type="peptide" id="PRO_0000000949" description="Corazonin precursor-related peptide">
    <location>
        <begin position="34"/>
        <end position="67"/>
    </location>
</feature>
<feature type="propeptide" id="PRO_0000000950">
    <location>
        <begin position="70"/>
        <end position="154"/>
    </location>
</feature>
<feature type="region of interest" description="Disordered" evidence="3">
    <location>
        <begin position="91"/>
        <end position="119"/>
    </location>
</feature>
<feature type="compositionally biased region" description="Polar residues" evidence="3">
    <location>
        <begin position="109"/>
        <end position="119"/>
    </location>
</feature>
<feature type="modified residue" description="Pyrrolidone carboxylic acid" evidence="4">
    <location>
        <position position="20"/>
    </location>
</feature>
<feature type="modified residue" description="Asparagine amide" evidence="4">
    <location>
        <position position="30"/>
    </location>
</feature>
<feature type="sequence conflict" description="In Ref. 3; AAB32283." evidence="8" ref="3">
    <original>L</original>
    <variation>Q</variation>
    <location>
        <position position="81"/>
    </location>
</feature>
<keyword id="KW-0027">Amidation</keyword>
<keyword id="KW-0165">Cleavage on pair of basic residues</keyword>
<keyword id="KW-0903">Direct protein sequencing</keyword>
<keyword id="KW-0527">Neuropeptide</keyword>
<keyword id="KW-0873">Pyrrolidone carboxylic acid</keyword>
<keyword id="KW-1185">Reference proteome</keyword>
<keyword id="KW-0964">Secreted</keyword>
<keyword id="KW-0732">Signal</keyword>